<evidence type="ECO:0000250" key="1"/>
<evidence type="ECO:0000250" key="2">
    <source>
        <dbReference type="UniProtKB" id="O95453"/>
    </source>
</evidence>
<evidence type="ECO:0000255" key="3">
    <source>
        <dbReference type="PROSITE-ProRule" id="PRU00382"/>
    </source>
</evidence>
<evidence type="ECO:0000256" key="4">
    <source>
        <dbReference type="SAM" id="MobiDB-lite"/>
    </source>
</evidence>
<evidence type="ECO:0000269" key="5">
    <source>
    </source>
</evidence>
<evidence type="ECO:0000303" key="6">
    <source ref="2"/>
</evidence>
<evidence type="ECO:0000305" key="7"/>
<sequence length="660" mass="75261">MEVTRQNFKEVLPEVCNAVQEADFISIDGEFTGISDGPSVSALTNGLDTPEERYTKLRKHSMNFLLFQFGVCTFRYDQNQSTYITKAFNFYIFPKPFSRTSPDIKFICQSSSIDFLASQGFDFNKVFRSGIPYLNQEEECQLREQYEERRGQMNGAGPVSYTPPSGTGVCNVPEDQREFIRSVEEKVEALLKNTDQTLDLEPCTGFQRKLIYQTLNSKYSKGLHVEALETEKKERFIQISKVDDEERRRREQQKQQREQEELNDAVGFSRVIRAISKSGKLVVGHNMLLDVMHTIHQFCGPLPEELDDFKEVAMTVFPRLLDTKLMASTQPFKEIIHNTSLAELHKQLRQKPFRPPTTECPEGLQSYDTSTEQLHEAGYDAFITGLCFISMANYLGSFLTPPKSHISARSKLLEPFYNKLFLMRVIDIPYLNMSGPDLQPKRDHVLYVTFPKEWKTSDLYQLFSAFGNIQVSWVDDTSAFVSLSQTEQVQIAMNTSRYAESYRIQTYAEYLQSRQKNTHSSRKWASDGWADTSYPSVAMTTASGYSHTDNWHQAVKRSISPSLDEQNHGADSSWTNYSVKKIKTEGSCTQTYADVAGSCDWPRLQADEGGASVSPVAEEAELDEFSANQSQGKRSRKHKKRKSDASETTPPALFDVPQVW</sequence>
<accession>Q7ZU92</accession>
<accession>Q6TGW3</accession>
<dbReference type="EC" id="3.1.13.4"/>
<dbReference type="EMBL" id="AY398393">
    <property type="protein sequence ID" value="AAQ97826.1"/>
    <property type="molecule type" value="mRNA"/>
</dbReference>
<dbReference type="EMBL" id="BC050496">
    <property type="protein sequence ID" value="AAH50496.1"/>
    <property type="molecule type" value="mRNA"/>
</dbReference>
<dbReference type="SMR" id="Q7ZU92"/>
<dbReference type="FunCoup" id="Q7ZU92">
    <property type="interactions" value="1419"/>
</dbReference>
<dbReference type="STRING" id="7955.ENSDARP00000139131"/>
<dbReference type="iPTMnet" id="Q7ZU92"/>
<dbReference type="PaxDb" id="7955-ENSDARP00000028687"/>
<dbReference type="AGR" id="ZFIN:ZDB-GENE-040426-880"/>
<dbReference type="ZFIN" id="ZDB-GENE-040426-880">
    <property type="gene designation" value="parn"/>
</dbReference>
<dbReference type="eggNOG" id="KOG1990">
    <property type="taxonomic scope" value="Eukaryota"/>
</dbReference>
<dbReference type="InParanoid" id="Q7ZU92"/>
<dbReference type="OrthoDB" id="1432093at2759"/>
<dbReference type="PhylomeDB" id="Q7ZU92"/>
<dbReference type="PRO" id="PR:Q7ZU92"/>
<dbReference type="Proteomes" id="UP000000437">
    <property type="component" value="Unplaced"/>
</dbReference>
<dbReference type="GO" id="GO:0005737">
    <property type="term" value="C:cytoplasm"/>
    <property type="evidence" value="ECO:0007669"/>
    <property type="project" value="UniProtKB-SubCell"/>
</dbReference>
<dbReference type="GO" id="GO:0005634">
    <property type="term" value="C:nucleus"/>
    <property type="evidence" value="ECO:0000318"/>
    <property type="project" value="GO_Central"/>
</dbReference>
<dbReference type="GO" id="GO:0000175">
    <property type="term" value="F:3'-5'-RNA exonuclease activity"/>
    <property type="evidence" value="ECO:0000318"/>
    <property type="project" value="GO_Central"/>
</dbReference>
<dbReference type="GO" id="GO:0043169">
    <property type="term" value="F:cation binding"/>
    <property type="evidence" value="ECO:0000250"/>
    <property type="project" value="UniProtKB"/>
</dbReference>
<dbReference type="GO" id="GO:0046872">
    <property type="term" value="F:metal ion binding"/>
    <property type="evidence" value="ECO:0007669"/>
    <property type="project" value="UniProtKB-KW"/>
</dbReference>
<dbReference type="GO" id="GO:0004535">
    <property type="term" value="F:poly(A)-specific ribonuclease activity"/>
    <property type="evidence" value="ECO:0007669"/>
    <property type="project" value="UniProtKB-EC"/>
</dbReference>
<dbReference type="GO" id="GO:0003723">
    <property type="term" value="F:RNA binding"/>
    <property type="evidence" value="ECO:0000250"/>
    <property type="project" value="UniProtKB"/>
</dbReference>
<dbReference type="GO" id="GO:0030097">
    <property type="term" value="P:hemopoiesis"/>
    <property type="evidence" value="ECO:0000315"/>
    <property type="project" value="ZFIN"/>
</dbReference>
<dbReference type="GO" id="GO:0000289">
    <property type="term" value="P:nuclear-transcribed mRNA poly(A) tail shortening"/>
    <property type="evidence" value="ECO:0000318"/>
    <property type="project" value="GO_Central"/>
</dbReference>
<dbReference type="GO" id="GO:1990431">
    <property type="term" value="P:priRNA 3'-end processing"/>
    <property type="evidence" value="ECO:0000318"/>
    <property type="project" value="GO_Central"/>
</dbReference>
<dbReference type="GO" id="GO:1990432">
    <property type="term" value="P:siRNA 3'-end processing"/>
    <property type="evidence" value="ECO:0000318"/>
    <property type="project" value="GO_Central"/>
</dbReference>
<dbReference type="CDD" id="cd02637">
    <property type="entry name" value="R3H_PARN"/>
    <property type="match status" value="1"/>
</dbReference>
<dbReference type="CDD" id="cd12428">
    <property type="entry name" value="RRM_PARN"/>
    <property type="match status" value="1"/>
</dbReference>
<dbReference type="FunFam" id="3.30.420.10:FF:000120">
    <property type="entry name" value="Poly(A)-specific ribonuclease PARN"/>
    <property type="match status" value="1"/>
</dbReference>
<dbReference type="FunFam" id="3.30.420.10:FF:000196">
    <property type="entry name" value="Poly(A)-specific ribonuclease PARN"/>
    <property type="match status" value="1"/>
</dbReference>
<dbReference type="FunFam" id="3.30.70.330:FF:000196">
    <property type="entry name" value="Poly(A)-specific ribonuclease PARN"/>
    <property type="match status" value="1"/>
</dbReference>
<dbReference type="Gene3D" id="3.30.70.330">
    <property type="match status" value="1"/>
</dbReference>
<dbReference type="Gene3D" id="3.30.420.10">
    <property type="entry name" value="Ribonuclease H-like superfamily/Ribonuclease H"/>
    <property type="match status" value="2"/>
</dbReference>
<dbReference type="InterPro" id="IPR051181">
    <property type="entry name" value="CAF1_poly(A)_ribonucleases"/>
</dbReference>
<dbReference type="InterPro" id="IPR012677">
    <property type="entry name" value="Nucleotide-bd_a/b_plait_sf"/>
</dbReference>
<dbReference type="InterPro" id="IPR034042">
    <property type="entry name" value="PARN_R3H"/>
</dbReference>
<dbReference type="InterPro" id="IPR014789">
    <property type="entry name" value="PolyA-riboNase_RNA-binding"/>
</dbReference>
<dbReference type="InterPro" id="IPR001374">
    <property type="entry name" value="R3H_dom"/>
</dbReference>
<dbReference type="InterPro" id="IPR036867">
    <property type="entry name" value="R3H_dom_sf"/>
</dbReference>
<dbReference type="InterPro" id="IPR035979">
    <property type="entry name" value="RBD_domain_sf"/>
</dbReference>
<dbReference type="InterPro" id="IPR006941">
    <property type="entry name" value="RNase_CAF1"/>
</dbReference>
<dbReference type="InterPro" id="IPR012337">
    <property type="entry name" value="RNaseH-like_sf"/>
</dbReference>
<dbReference type="InterPro" id="IPR036397">
    <property type="entry name" value="RNaseH_sf"/>
</dbReference>
<dbReference type="PANTHER" id="PTHR15092">
    <property type="entry name" value="POLY A -SPECIFIC RIBONUCLEASE/TARGET OF EGR1, MEMBER 1"/>
    <property type="match status" value="1"/>
</dbReference>
<dbReference type="PANTHER" id="PTHR15092:SF44">
    <property type="entry name" value="POLY(A)-SPECIFIC RIBONUCLEASE PARN"/>
    <property type="match status" value="1"/>
</dbReference>
<dbReference type="Pfam" id="PF04857">
    <property type="entry name" value="CAF1"/>
    <property type="match status" value="1"/>
</dbReference>
<dbReference type="Pfam" id="PF08675">
    <property type="entry name" value="RNA_bind"/>
    <property type="match status" value="1"/>
</dbReference>
<dbReference type="SUPFAM" id="SSF82708">
    <property type="entry name" value="R3H domain"/>
    <property type="match status" value="1"/>
</dbReference>
<dbReference type="SUPFAM" id="SSF53098">
    <property type="entry name" value="Ribonuclease H-like"/>
    <property type="match status" value="1"/>
</dbReference>
<dbReference type="SUPFAM" id="SSF54928">
    <property type="entry name" value="RNA-binding domain, RBD"/>
    <property type="match status" value="1"/>
</dbReference>
<dbReference type="PROSITE" id="PS51061">
    <property type="entry name" value="R3H"/>
    <property type="match status" value="1"/>
</dbReference>
<organism>
    <name type="scientific">Danio rerio</name>
    <name type="common">Zebrafish</name>
    <name type="synonym">Brachydanio rerio</name>
    <dbReference type="NCBI Taxonomy" id="7955"/>
    <lineage>
        <taxon>Eukaryota</taxon>
        <taxon>Metazoa</taxon>
        <taxon>Chordata</taxon>
        <taxon>Craniata</taxon>
        <taxon>Vertebrata</taxon>
        <taxon>Euteleostomi</taxon>
        <taxon>Actinopterygii</taxon>
        <taxon>Neopterygii</taxon>
        <taxon>Teleostei</taxon>
        <taxon>Ostariophysi</taxon>
        <taxon>Cypriniformes</taxon>
        <taxon>Danionidae</taxon>
        <taxon>Danioninae</taxon>
        <taxon>Danio</taxon>
    </lineage>
</organism>
<reference key="1">
    <citation type="journal article" date="2004" name="Proc. Natl. Acad. Sci. U.S.A.">
        <title>Hematopoietic gene expression profile in zebrafish kidney marrow.</title>
        <authorList>
            <person name="Song H.-D."/>
            <person name="Sun X.-J."/>
            <person name="Deng M."/>
            <person name="Zhang G.-W."/>
            <person name="Zhou Y."/>
            <person name="Wu X.-Y."/>
            <person name="Sheng Y."/>
            <person name="Chen Y."/>
            <person name="Ruan Z."/>
            <person name="Jiang C.-L."/>
            <person name="Fan H.-Y."/>
            <person name="Zon L.I."/>
            <person name="Kanki J.P."/>
            <person name="Liu T.X."/>
            <person name="Look A.T."/>
            <person name="Chen Z."/>
        </authorList>
    </citation>
    <scope>NUCLEOTIDE SEQUENCE [LARGE SCALE MRNA] (ISOFORM 1)</scope>
    <source>
        <tissue>Kidney marrow</tissue>
    </source>
</reference>
<reference key="2">
    <citation type="submission" date="2003-04" db="EMBL/GenBank/DDBJ databases">
        <authorList>
            <consortium name="NIH - Zebrafish Gene Collection (ZGC) project"/>
        </authorList>
    </citation>
    <scope>NUCLEOTIDE SEQUENCE [LARGE SCALE MRNA] (ISOFORM 2)</scope>
    <source>
        <strain>AB</strain>
    </source>
</reference>
<reference key="3">
    <citation type="journal article" date="2008" name="J. Proteome Res.">
        <title>Online automated in vivo zebrafish phosphoproteomics: from large-scale analysis down to a single embryo.</title>
        <authorList>
            <person name="Lemeer S."/>
            <person name="Pinkse M.W.H."/>
            <person name="Mohammed S."/>
            <person name="van Breukelen B."/>
            <person name="den Hertog J."/>
            <person name="Slijper M."/>
            <person name="Heck A.J.R."/>
        </authorList>
    </citation>
    <scope>PHOSPHORYLATION [LARGE SCALE ANALYSIS] AT SER-560; SER-614; SER-643 AND THR-649</scope>
    <scope>IDENTIFICATION BY MASS SPECTROMETRY</scope>
    <source>
        <tissue>Embryo</tissue>
    </source>
</reference>
<proteinExistence type="evidence at protein level"/>
<feature type="chain" id="PRO_0000212854" description="Poly(A)-specific ribonuclease PARN">
    <location>
        <begin position="1"/>
        <end position="660"/>
    </location>
</feature>
<feature type="domain" description="R3H" evidence="3">
    <location>
        <begin position="177"/>
        <end position="243"/>
    </location>
</feature>
<feature type="region of interest" description="Disordered" evidence="4">
    <location>
        <begin position="606"/>
        <end position="660"/>
    </location>
</feature>
<feature type="compositionally biased region" description="Basic residues" evidence="4">
    <location>
        <begin position="633"/>
        <end position="642"/>
    </location>
</feature>
<feature type="binding site" evidence="2">
    <location>
        <position position="28"/>
    </location>
    <ligand>
        <name>a divalent metal cation</name>
        <dbReference type="ChEBI" id="CHEBI:60240"/>
        <note>catalytic</note>
    </ligand>
</feature>
<feature type="binding site" evidence="2">
    <location>
        <position position="30"/>
    </location>
    <ligand>
        <name>a divalent metal cation</name>
        <dbReference type="ChEBI" id="CHEBI:60240"/>
        <note>catalytic</note>
    </ligand>
</feature>
<feature type="binding site" evidence="2">
    <location>
        <position position="290"/>
    </location>
    <ligand>
        <name>a divalent metal cation</name>
        <dbReference type="ChEBI" id="CHEBI:60240"/>
        <note>catalytic</note>
    </ligand>
</feature>
<feature type="binding site" evidence="2">
    <location>
        <position position="380"/>
    </location>
    <ligand>
        <name>a divalent metal cation</name>
        <dbReference type="ChEBI" id="CHEBI:60240"/>
        <note>catalytic</note>
    </ligand>
</feature>
<feature type="site" description="Interaction with poly(A)" evidence="2">
    <location>
        <position position="324"/>
    </location>
</feature>
<feature type="modified residue" description="Phosphoserine" evidence="5">
    <location>
        <position position="560"/>
    </location>
</feature>
<feature type="modified residue" description="Phosphoserine" evidence="5">
    <location>
        <position position="614"/>
    </location>
</feature>
<feature type="modified residue" description="Phosphoserine" evidence="5">
    <location>
        <position position="643"/>
    </location>
</feature>
<feature type="modified residue" description="Phosphothreonine" evidence="5">
    <location>
        <position position="649"/>
    </location>
</feature>
<feature type="splice variant" id="VSP_012900" description="In isoform 2." evidence="6">
    <location>
        <begin position="632"/>
        <end position="644"/>
    </location>
</feature>
<feature type="sequence conflict" description="In Ref. 1; AAQ97826." evidence="7" ref="1">
    <original>N</original>
    <variation>T</variation>
    <location>
        <position position="135"/>
    </location>
</feature>
<feature type="sequence conflict" description="In Ref. 1; AAQ97826." evidence="7" ref="1">
    <original>A</original>
    <variation>T</variation>
    <location>
        <position position="227"/>
    </location>
</feature>
<feature type="sequence conflict" description="In Ref. 1; AAQ97826." evidence="7" ref="1">
    <original>W</original>
    <variation>R</variation>
    <location>
        <position position="551"/>
    </location>
</feature>
<keyword id="KW-0025">Alternative splicing</keyword>
<keyword id="KW-0963">Cytoplasm</keyword>
<keyword id="KW-0269">Exonuclease</keyword>
<keyword id="KW-0378">Hydrolase</keyword>
<keyword id="KW-0479">Metal-binding</keyword>
<keyword id="KW-0540">Nuclease</keyword>
<keyword id="KW-0539">Nucleus</keyword>
<keyword id="KW-0597">Phosphoprotein</keyword>
<keyword id="KW-1185">Reference proteome</keyword>
<keyword id="KW-0694">RNA-binding</keyword>
<gene>
    <name type="primary">parn</name>
    <name type="ORF">zgc:56067</name>
</gene>
<protein>
    <recommendedName>
        <fullName>Poly(A)-specific ribonuclease PARN</fullName>
        <ecNumber>3.1.13.4</ecNumber>
    </recommendedName>
    <alternativeName>
        <fullName>Polyadenylate-specific ribonuclease</fullName>
    </alternativeName>
</protein>
<comment type="function">
    <text evidence="1">3'-exoribonuclease that has a preference for poly(A) tails of mRNAs, thereby efficiently degrading poly(A) tails. Exonucleolytic degradation of the poly(A) tail is often the first step in the decay of eukaryotic mRNAs and is also used to silence certain maternal mRNAs translationally during oocyte maturation and early embryonic development (By similarity).</text>
</comment>
<comment type="catalytic activity">
    <reaction>
        <text>Exonucleolytic cleavage of poly(A) to 5'-AMP.</text>
        <dbReference type="EC" id="3.1.13.4"/>
    </reaction>
</comment>
<comment type="cofactor">
    <cofactor evidence="2">
        <name>a divalent metal cation</name>
        <dbReference type="ChEBI" id="CHEBI:60240"/>
    </cofactor>
</comment>
<comment type="subcellular location">
    <subcellularLocation>
        <location evidence="1">Cytoplasm</location>
    </subcellularLocation>
    <subcellularLocation>
        <location evidence="1">Nucleus</location>
    </subcellularLocation>
</comment>
<comment type="alternative products">
    <event type="alternative splicing"/>
    <isoform>
        <id>Q7ZU92-1</id>
        <name>1</name>
        <sequence type="displayed"/>
    </isoform>
    <isoform>
        <id>Q7ZU92-2</id>
        <name>2</name>
        <sequence type="described" ref="VSP_012900"/>
    </isoform>
</comment>
<comment type="similarity">
    <text evidence="7">Belongs to the CAF1 family.</text>
</comment>
<name>PARN_DANRE</name>